<keyword id="KW-0045">Antibiotic biosynthesis</keyword>
<keyword id="KW-0808">Transferase</keyword>
<feature type="chain" id="PRO_0000435604" description="3,5-dihydroxyphenylacetyl-CoA synthase">
    <location>
        <begin position="1"/>
        <end position="390"/>
    </location>
</feature>
<feature type="active site" evidence="1">
    <location>
        <position position="173"/>
    </location>
</feature>
<reference key="1">
    <citation type="journal article" date="1997" name="Proc. Natl. Acad. Sci. U.S.A.">
        <title>D-Ala-D-Ala ligases from glycopeptide antibiotic-producing organisms are highly homologous to the enterococcal vancomycin-resistance ligases VanA and VanB.</title>
        <authorList>
            <person name="Marshall C.G."/>
            <person name="Broadhead G."/>
            <person name="Leskiw B.K."/>
            <person name="Wright G.D."/>
        </authorList>
    </citation>
    <scope>NUCLEOTIDE SEQUENCE [GENOMIC DNA]</scope>
    <source>
        <strain>NRRL 15009</strain>
    </source>
</reference>
<reference key="2">
    <citation type="journal article" date="2002" name="Proc. Natl. Acad. Sci. U.S.A.">
        <title>Assembling the glycopeptide antibiotic scaffold: the biosynthesis of A47934 from Streptomyces toyocaensis NRRL15009.</title>
        <authorList>
            <person name="Pootoolal J."/>
            <person name="Thomas M.G."/>
            <person name="Marshall C.G."/>
            <person name="Neu J.M."/>
            <person name="Hubbard B.K."/>
            <person name="Walsh C.T."/>
            <person name="Wright G.D."/>
        </authorList>
    </citation>
    <scope>NUCLEOTIDE SEQUENCE [GENOMIC DNA]</scope>
    <source>
        <strain>NRRL 15009</strain>
    </source>
</reference>
<reference key="3">
    <citation type="journal article" date="2012" name="ChemBioChem">
        <title>Chain elongation and cyclization in type III PKS DpgA.</title>
        <authorList>
            <person name="Wu H.C."/>
            <person name="Li Y.S."/>
            <person name="Liu Y.C."/>
            <person name="Lyu S.Y."/>
            <person name="Wu C.J."/>
            <person name="Li T.L."/>
        </authorList>
    </citation>
    <scope>FUNCTION</scope>
    <scope>CATALYTIC ACTIVITY</scope>
</reference>
<evidence type="ECO:0000250" key="1">
    <source>
        <dbReference type="UniProtKB" id="Q939X3"/>
    </source>
</evidence>
<evidence type="ECO:0000269" key="2">
    <source>
    </source>
</evidence>
<evidence type="ECO:0000303" key="3">
    <source>
    </source>
</evidence>
<evidence type="ECO:0000305" key="4"/>
<evidence type="ECO:0000305" key="5">
    <source>
    </source>
</evidence>
<sequence>MGVDLQVTVNLDHPELLDAPVLETGVLSAEGRALPTPPRPRIVGVGTAVTRTSYSQQEVLDAFGITDRKVRSIFLNSAIERRNLTLPPMDSDSVRVSESQGDLLDKHKKLAIEMGAEALHACLKRCGAELSDLRHLCCVTSTGFLTPGLSALLIRELGIDRHCSRSDIVGMGCNAGLNALNVVAGWSAAHPGELAVVLCAEACSAAYTMDSTMRTAVVNSLFGDGAAAVALLAGPGGATPATSEGPTVLKFASCIIPEAVDAMRYDWDRTQGRFSFFLDPQIPYVVGAHAETVVDRLLSGTGLRRSDIGHWLVHSGGKKVIDAVVVNLGLTRHDVRHTIGVLRDQGNVSSGSFLFSYERLLEEGITRPGEYGVLMTMGPGSTIETALVQW</sequence>
<protein>
    <recommendedName>
        <fullName evidence="3">3,5-dihydroxyphenylacetyl-CoA synthase</fullName>
        <ecNumber evidence="2">2.3.1.246</ecNumber>
    </recommendedName>
    <alternativeName>
        <fullName evidence="4">3,5-dihydroxyphenylacetyl-CoA synthase polyketide synthase type III</fullName>
    </alternativeName>
</protein>
<dbReference type="EC" id="2.3.1.246" evidence="2"/>
<dbReference type="EMBL" id="U82965">
    <property type="protein sequence ID" value="AAM80548.1"/>
    <property type="molecule type" value="Genomic_DNA"/>
</dbReference>
<dbReference type="SMR" id="Q8KLK5"/>
<dbReference type="STRING" id="55952.BU52_01210"/>
<dbReference type="eggNOG" id="COG3424">
    <property type="taxonomic scope" value="Bacteria"/>
</dbReference>
<dbReference type="UniPathway" id="UPA00162"/>
<dbReference type="GO" id="GO:0016747">
    <property type="term" value="F:acyltransferase activity, transferring groups other than amino-acyl groups"/>
    <property type="evidence" value="ECO:0000314"/>
    <property type="project" value="UniProtKB"/>
</dbReference>
<dbReference type="GO" id="GO:0030639">
    <property type="term" value="P:polyketide biosynthetic process"/>
    <property type="evidence" value="ECO:0007669"/>
    <property type="project" value="TreeGrafter"/>
</dbReference>
<dbReference type="GO" id="GO:0033072">
    <property type="term" value="P:vancomycin biosynthetic process"/>
    <property type="evidence" value="ECO:0007669"/>
    <property type="project" value="UniProtKB-UniPathway"/>
</dbReference>
<dbReference type="CDD" id="cd00831">
    <property type="entry name" value="CHS_like"/>
    <property type="match status" value="1"/>
</dbReference>
<dbReference type="FunFam" id="3.40.47.10:FF:000103">
    <property type="entry name" value="3,5-dihydroxyphenylacetyl-CoA synthase"/>
    <property type="match status" value="1"/>
</dbReference>
<dbReference type="FunFam" id="3.40.47.10:FF:000014">
    <property type="entry name" value="Chalcone synthase 1"/>
    <property type="match status" value="1"/>
</dbReference>
<dbReference type="Gene3D" id="3.40.47.10">
    <property type="match status" value="2"/>
</dbReference>
<dbReference type="InterPro" id="IPR012328">
    <property type="entry name" value="Chalcone/stilbene_synt_C"/>
</dbReference>
<dbReference type="InterPro" id="IPR001099">
    <property type="entry name" value="Chalcone/stilbene_synt_N"/>
</dbReference>
<dbReference type="InterPro" id="IPR053446">
    <property type="entry name" value="DPA-CoA_Synthase"/>
</dbReference>
<dbReference type="InterPro" id="IPR011141">
    <property type="entry name" value="Polyketide_synthase_type-III"/>
</dbReference>
<dbReference type="InterPro" id="IPR016039">
    <property type="entry name" value="Thiolase-like"/>
</dbReference>
<dbReference type="NCBIfam" id="NF042429">
    <property type="entry name" value="DHPHCoAsyn_DpgA"/>
    <property type="match status" value="1"/>
</dbReference>
<dbReference type="PANTHER" id="PTHR11877">
    <property type="entry name" value="HYDROXYMETHYLGLUTARYL-COA SYNTHASE"/>
    <property type="match status" value="1"/>
</dbReference>
<dbReference type="PANTHER" id="PTHR11877:SF46">
    <property type="entry name" value="TYPE III POLYKETIDE SYNTHASE A"/>
    <property type="match status" value="1"/>
</dbReference>
<dbReference type="Pfam" id="PF02797">
    <property type="entry name" value="Chal_sti_synt_C"/>
    <property type="match status" value="1"/>
</dbReference>
<dbReference type="Pfam" id="PF00195">
    <property type="entry name" value="Chal_sti_synt_N"/>
    <property type="match status" value="1"/>
</dbReference>
<dbReference type="PIRSF" id="PIRSF000451">
    <property type="entry name" value="PKS_III"/>
    <property type="match status" value="1"/>
</dbReference>
<dbReference type="SUPFAM" id="SSF53901">
    <property type="entry name" value="Thiolase-like"/>
    <property type="match status" value="1"/>
</dbReference>
<comment type="function">
    <text evidence="2">Involved in the biosynthesis of the nonproteinogenic amino acid monomer (S)-3,5-dihydroxyphenylglycine (Dpg) responsible of the production of vancomycin and teicoplanin antibiotics. Catalyzes the Claisen condensation of four molecules of malonyl-CoA to yield 3,5-dihydroxyphenylacetyl-CoA (DPA-CoA) and three free coenzyme A (CoA). DpgA requires the presence of the dehydratases DpgB and DpgD to facilitate the aromatization of the DPA-S-DgpA or DPA-S-CoA intermediate.</text>
</comment>
<comment type="catalytic activity">
    <reaction evidence="2">
        <text>4 malonyl-CoA + 4 H(+) = (3,5-dihydroxyphenyl)acetyl-CoA + 4 CO2 + 3 CoA + H2O</text>
        <dbReference type="Rhea" id="RHEA:44744"/>
        <dbReference type="ChEBI" id="CHEBI:15377"/>
        <dbReference type="ChEBI" id="CHEBI:15378"/>
        <dbReference type="ChEBI" id="CHEBI:16526"/>
        <dbReference type="ChEBI" id="CHEBI:57287"/>
        <dbReference type="ChEBI" id="CHEBI:57384"/>
        <dbReference type="ChEBI" id="CHEBI:84554"/>
        <dbReference type="EC" id="2.3.1.246"/>
    </reaction>
</comment>
<comment type="pathway">
    <text evidence="5">Antibiotic biosynthesis; vancomycin biosynthesis.</text>
</comment>
<comment type="similarity">
    <text evidence="4">Belongs to the thiolase-like superfamily. Chalcone/stilbene synthases family.</text>
</comment>
<name>DPGA_STRTO</name>
<accession>Q8KLK5</accession>
<organism>
    <name type="scientific">Streptomyces toyocaensis</name>
    <dbReference type="NCBI Taxonomy" id="55952"/>
    <lineage>
        <taxon>Bacteria</taxon>
        <taxon>Bacillati</taxon>
        <taxon>Actinomycetota</taxon>
        <taxon>Actinomycetes</taxon>
        <taxon>Kitasatosporales</taxon>
        <taxon>Streptomycetaceae</taxon>
        <taxon>Streptomyces</taxon>
    </lineage>
</organism>
<proteinExistence type="evidence at protein level"/>